<name>HIS4_PSEE4</name>
<reference key="1">
    <citation type="journal article" date="2006" name="Nat. Biotechnol.">
        <title>Complete genome sequence of the entomopathogenic and metabolically versatile soil bacterium Pseudomonas entomophila.</title>
        <authorList>
            <person name="Vodovar N."/>
            <person name="Vallenet D."/>
            <person name="Cruveiller S."/>
            <person name="Rouy Z."/>
            <person name="Barbe V."/>
            <person name="Acosta C."/>
            <person name="Cattolico L."/>
            <person name="Jubin C."/>
            <person name="Lajus A."/>
            <person name="Segurens B."/>
            <person name="Vacherie B."/>
            <person name="Wincker P."/>
            <person name="Weissenbach J."/>
            <person name="Lemaitre B."/>
            <person name="Medigue C."/>
            <person name="Boccard F."/>
        </authorList>
    </citation>
    <scope>NUCLEOTIDE SEQUENCE [LARGE SCALE GENOMIC DNA]</scope>
    <source>
        <strain>L48</strain>
    </source>
</reference>
<comment type="catalytic activity">
    <reaction evidence="1">
        <text>1-(5-phospho-beta-D-ribosyl)-5-[(5-phospho-beta-D-ribosylamino)methylideneamino]imidazole-4-carboxamide = 5-[(5-phospho-1-deoxy-D-ribulos-1-ylimino)methylamino]-1-(5-phospho-beta-D-ribosyl)imidazole-4-carboxamide</text>
        <dbReference type="Rhea" id="RHEA:15469"/>
        <dbReference type="ChEBI" id="CHEBI:58435"/>
        <dbReference type="ChEBI" id="CHEBI:58525"/>
        <dbReference type="EC" id="5.3.1.16"/>
    </reaction>
</comment>
<comment type="pathway">
    <text evidence="1">Amino-acid biosynthesis; L-histidine biosynthesis; L-histidine from 5-phospho-alpha-D-ribose 1-diphosphate: step 4/9.</text>
</comment>
<comment type="subcellular location">
    <subcellularLocation>
        <location evidence="1">Cytoplasm</location>
    </subcellularLocation>
</comment>
<comment type="similarity">
    <text evidence="1">Belongs to the HisA/HisF family.</text>
</comment>
<gene>
    <name evidence="1" type="primary">hisA</name>
    <name type="ordered locus">PSEEN5192</name>
</gene>
<dbReference type="EC" id="5.3.1.16" evidence="1"/>
<dbReference type="EMBL" id="CT573326">
    <property type="protein sequence ID" value="CAK17819.1"/>
    <property type="molecule type" value="Genomic_DNA"/>
</dbReference>
<dbReference type="RefSeq" id="WP_011536178.1">
    <property type="nucleotide sequence ID" value="NC_008027.1"/>
</dbReference>
<dbReference type="SMR" id="Q1I3G7"/>
<dbReference type="STRING" id="384676.PSEEN5192"/>
<dbReference type="GeneID" id="32808121"/>
<dbReference type="KEGG" id="pen:PSEEN5192"/>
<dbReference type="eggNOG" id="COG0106">
    <property type="taxonomic scope" value="Bacteria"/>
</dbReference>
<dbReference type="HOGENOM" id="CLU_048577_1_1_6"/>
<dbReference type="OrthoDB" id="9807749at2"/>
<dbReference type="UniPathway" id="UPA00031">
    <property type="reaction ID" value="UER00009"/>
</dbReference>
<dbReference type="Proteomes" id="UP000000658">
    <property type="component" value="Chromosome"/>
</dbReference>
<dbReference type="GO" id="GO:0005737">
    <property type="term" value="C:cytoplasm"/>
    <property type="evidence" value="ECO:0007669"/>
    <property type="project" value="UniProtKB-SubCell"/>
</dbReference>
<dbReference type="GO" id="GO:0003949">
    <property type="term" value="F:1-(5-phosphoribosyl)-5-[(5-phosphoribosylamino)methylideneamino]imidazole-4-carboxamide isomerase activity"/>
    <property type="evidence" value="ECO:0007669"/>
    <property type="project" value="UniProtKB-UniRule"/>
</dbReference>
<dbReference type="GO" id="GO:0000105">
    <property type="term" value="P:L-histidine biosynthetic process"/>
    <property type="evidence" value="ECO:0007669"/>
    <property type="project" value="UniProtKB-UniRule"/>
</dbReference>
<dbReference type="GO" id="GO:0000162">
    <property type="term" value="P:L-tryptophan biosynthetic process"/>
    <property type="evidence" value="ECO:0007669"/>
    <property type="project" value="TreeGrafter"/>
</dbReference>
<dbReference type="CDD" id="cd04732">
    <property type="entry name" value="HisA"/>
    <property type="match status" value="1"/>
</dbReference>
<dbReference type="FunFam" id="3.20.20.70:FF:000009">
    <property type="entry name" value="1-(5-phosphoribosyl)-5-[(5-phosphoribosylamino)methylideneamino] imidazole-4-carboxamide isomerase"/>
    <property type="match status" value="1"/>
</dbReference>
<dbReference type="Gene3D" id="3.20.20.70">
    <property type="entry name" value="Aldolase class I"/>
    <property type="match status" value="1"/>
</dbReference>
<dbReference type="HAMAP" id="MF_01014">
    <property type="entry name" value="HisA"/>
    <property type="match status" value="1"/>
</dbReference>
<dbReference type="InterPro" id="IPR013785">
    <property type="entry name" value="Aldolase_TIM"/>
</dbReference>
<dbReference type="InterPro" id="IPR006062">
    <property type="entry name" value="His_biosynth"/>
</dbReference>
<dbReference type="InterPro" id="IPR006063">
    <property type="entry name" value="HisA_bact_arch"/>
</dbReference>
<dbReference type="InterPro" id="IPR044524">
    <property type="entry name" value="Isoase_HisA-like"/>
</dbReference>
<dbReference type="InterPro" id="IPR023016">
    <property type="entry name" value="Isoase_HisA-like_bact"/>
</dbReference>
<dbReference type="InterPro" id="IPR011060">
    <property type="entry name" value="RibuloseP-bd_barrel"/>
</dbReference>
<dbReference type="NCBIfam" id="TIGR00007">
    <property type="entry name" value="1-(5-phosphoribosyl)-5-[(5-phosphoribosylamino)methylideneamino]imidazole-4-carboxamide isomerase"/>
    <property type="match status" value="1"/>
</dbReference>
<dbReference type="PANTHER" id="PTHR43090">
    <property type="entry name" value="1-(5-PHOSPHORIBOSYL)-5-[(5-PHOSPHORIBOSYLAMINO)METHYLIDENEAMINO] IMIDAZOLE-4-CARBOXAMIDE ISOMERASE"/>
    <property type="match status" value="1"/>
</dbReference>
<dbReference type="PANTHER" id="PTHR43090:SF2">
    <property type="entry name" value="1-(5-PHOSPHORIBOSYL)-5-[(5-PHOSPHORIBOSYLAMINO)METHYLIDENEAMINO] IMIDAZOLE-4-CARBOXAMIDE ISOMERASE"/>
    <property type="match status" value="1"/>
</dbReference>
<dbReference type="Pfam" id="PF00977">
    <property type="entry name" value="His_biosynth"/>
    <property type="match status" value="1"/>
</dbReference>
<dbReference type="SUPFAM" id="SSF51366">
    <property type="entry name" value="Ribulose-phoshate binding barrel"/>
    <property type="match status" value="1"/>
</dbReference>
<feature type="chain" id="PRO_0000290514" description="1-(5-phosphoribosyl)-5-[(5-phosphoribosylamino)methylideneamino] imidazole-4-carboxamide isomerase">
    <location>
        <begin position="1"/>
        <end position="245"/>
    </location>
</feature>
<feature type="active site" description="Proton acceptor" evidence="1">
    <location>
        <position position="8"/>
    </location>
</feature>
<feature type="active site" description="Proton donor" evidence="1">
    <location>
        <position position="130"/>
    </location>
</feature>
<accession>Q1I3G7</accession>
<organism>
    <name type="scientific">Pseudomonas entomophila (strain L48)</name>
    <dbReference type="NCBI Taxonomy" id="384676"/>
    <lineage>
        <taxon>Bacteria</taxon>
        <taxon>Pseudomonadati</taxon>
        <taxon>Pseudomonadota</taxon>
        <taxon>Gammaproteobacteria</taxon>
        <taxon>Pseudomonadales</taxon>
        <taxon>Pseudomonadaceae</taxon>
        <taxon>Pseudomonas</taxon>
    </lineage>
</organism>
<keyword id="KW-0028">Amino-acid biosynthesis</keyword>
<keyword id="KW-0963">Cytoplasm</keyword>
<keyword id="KW-0368">Histidine biosynthesis</keyword>
<keyword id="KW-0413">Isomerase</keyword>
<proteinExistence type="inferred from homology"/>
<evidence type="ECO:0000255" key="1">
    <source>
        <dbReference type="HAMAP-Rule" id="MF_01014"/>
    </source>
</evidence>
<sequence length="245" mass="25824">MLIIPAIDLKDGACVRLRQGRMEDSTVFSDDPVSMAAKWVEGGCRRLHLVDLNGAFEGQPVNGEVVTAIAKRYPNLPIQIGGGIRSLETIEHYVKAGVSHVIIGTKAVKQPEFVAEACKAFPGRVIVGLDAKDGFVATDGWAEVSAVQVIDLAKRFEADGVSAIVYTDIAKDGMMQGCNVPFTKALAEATSIPVIASGGIHNLGDIKALLDAKAPGIIGAITGRAIYEGTLDVAEAQAFCDNYQG</sequence>
<protein>
    <recommendedName>
        <fullName evidence="1">1-(5-phosphoribosyl)-5-[(5-phosphoribosylamino)methylideneamino] imidazole-4-carboxamide isomerase</fullName>
        <ecNumber evidence="1">5.3.1.16</ecNumber>
    </recommendedName>
    <alternativeName>
        <fullName evidence="1">Phosphoribosylformimino-5-aminoimidazole carboxamide ribotide isomerase</fullName>
    </alternativeName>
</protein>